<evidence type="ECO:0000255" key="1">
    <source>
        <dbReference type="HAMAP-Rule" id="MF_01685"/>
    </source>
</evidence>
<keyword id="KW-0274">FAD</keyword>
<keyword id="KW-0285">Flavoprotein</keyword>
<keyword id="KW-0521">NADP</keyword>
<keyword id="KW-0560">Oxidoreductase</keyword>
<feature type="chain" id="PRO_0000364901" description="Ferredoxin--NADP reductase">
    <location>
        <begin position="1"/>
        <end position="348"/>
    </location>
</feature>
<feature type="binding site" evidence="1">
    <location>
        <position position="26"/>
    </location>
    <ligand>
        <name>FAD</name>
        <dbReference type="ChEBI" id="CHEBI:57692"/>
    </ligand>
</feature>
<feature type="binding site" evidence="1">
    <location>
        <position position="45"/>
    </location>
    <ligand>
        <name>FAD</name>
        <dbReference type="ChEBI" id="CHEBI:57692"/>
    </ligand>
</feature>
<feature type="binding site" evidence="1">
    <location>
        <position position="53"/>
    </location>
    <ligand>
        <name>FAD</name>
        <dbReference type="ChEBI" id="CHEBI:57692"/>
    </ligand>
</feature>
<feature type="binding site" evidence="1">
    <location>
        <position position="58"/>
    </location>
    <ligand>
        <name>FAD</name>
        <dbReference type="ChEBI" id="CHEBI:57692"/>
    </ligand>
</feature>
<feature type="binding site" evidence="1">
    <location>
        <position position="98"/>
    </location>
    <ligand>
        <name>FAD</name>
        <dbReference type="ChEBI" id="CHEBI:57692"/>
    </ligand>
</feature>
<feature type="binding site" evidence="1">
    <location>
        <position position="133"/>
    </location>
    <ligand>
        <name>FAD</name>
        <dbReference type="ChEBI" id="CHEBI:57692"/>
    </ligand>
</feature>
<feature type="binding site" evidence="1">
    <location>
        <position position="299"/>
    </location>
    <ligand>
        <name>FAD</name>
        <dbReference type="ChEBI" id="CHEBI:57692"/>
    </ligand>
</feature>
<feature type="binding site" evidence="1">
    <location>
        <position position="340"/>
    </location>
    <ligand>
        <name>FAD</name>
        <dbReference type="ChEBI" id="CHEBI:57692"/>
    </ligand>
</feature>
<reference key="1">
    <citation type="submission" date="2008-06" db="EMBL/GenBank/DDBJ databases">
        <title>Complete sequence of chromosome of Prosthecochloris aestuarii DSM 271.</title>
        <authorList>
            <consortium name="US DOE Joint Genome Institute"/>
            <person name="Lucas S."/>
            <person name="Copeland A."/>
            <person name="Lapidus A."/>
            <person name="Glavina del Rio T."/>
            <person name="Dalin E."/>
            <person name="Tice H."/>
            <person name="Bruce D."/>
            <person name="Goodwin L."/>
            <person name="Pitluck S."/>
            <person name="Schmutz J."/>
            <person name="Larimer F."/>
            <person name="Land M."/>
            <person name="Hauser L."/>
            <person name="Kyrpides N."/>
            <person name="Anderson I."/>
            <person name="Liu Z."/>
            <person name="Li T."/>
            <person name="Zhao F."/>
            <person name="Overmann J."/>
            <person name="Bryant D.A."/>
            <person name="Richardson P."/>
        </authorList>
    </citation>
    <scope>NUCLEOTIDE SEQUENCE [LARGE SCALE GENOMIC DNA]</scope>
    <source>
        <strain>DSM 271 / SK 413</strain>
    </source>
</reference>
<protein>
    <recommendedName>
        <fullName evidence="1">Ferredoxin--NADP reductase</fullName>
        <shortName evidence="1">FNR</shortName>
        <shortName evidence="1">Fd-NADP(+) reductase</shortName>
        <ecNumber evidence="1">1.18.1.2</ecNumber>
    </recommendedName>
</protein>
<gene>
    <name type="ordered locus">Paes_1610</name>
</gene>
<accession>B4S9F8</accession>
<sequence>MSNNGVNALPATGDLCDLTIVGGGPTGIFAAFQCGMNNMSCRIIESMPQLGGQLTALYPEKHIYDVAAFNEVQASGLVDSLWTQAGRYNPEVVLNDQAVSFKKLDDGSFVVMSAAGASFRSRALLIAAGLGAFTPRTLPQLGDVSHLEGSSLFYSVTSRNDFEGKRVVIVGGGDSALDWTMGLLPLAERVTVVHRMASFQGHGKTAHEVLDAREDGKIEVHFNTEVASLETSGSCLRRVCTRSKSGHEEVIDADCLLLLIGFKSNLGPIAQWGLELQDNAIVVDNQMKTSVDGLYAAGDIASYPGKLKIIQTGLSDATMAVRHSLSYIKPGEKIRHQFSSVKMAKEKK</sequence>
<name>FENR_PROA2</name>
<organism>
    <name type="scientific">Prosthecochloris aestuarii (strain DSM 271 / SK 413)</name>
    <dbReference type="NCBI Taxonomy" id="290512"/>
    <lineage>
        <taxon>Bacteria</taxon>
        <taxon>Pseudomonadati</taxon>
        <taxon>Chlorobiota</taxon>
        <taxon>Chlorobiia</taxon>
        <taxon>Chlorobiales</taxon>
        <taxon>Chlorobiaceae</taxon>
        <taxon>Prosthecochloris</taxon>
    </lineage>
</organism>
<dbReference type="EC" id="1.18.1.2" evidence="1"/>
<dbReference type="EMBL" id="CP001108">
    <property type="protein sequence ID" value="ACF46628.1"/>
    <property type="molecule type" value="Genomic_DNA"/>
</dbReference>
<dbReference type="RefSeq" id="WP_012506161.1">
    <property type="nucleotide sequence ID" value="NC_011059.1"/>
</dbReference>
<dbReference type="SMR" id="B4S9F8"/>
<dbReference type="STRING" id="290512.Paes_1610"/>
<dbReference type="KEGG" id="paa:Paes_1610"/>
<dbReference type="eggNOG" id="COG0492">
    <property type="taxonomic scope" value="Bacteria"/>
</dbReference>
<dbReference type="HOGENOM" id="CLU_031864_5_5_10"/>
<dbReference type="Proteomes" id="UP000002725">
    <property type="component" value="Chromosome"/>
</dbReference>
<dbReference type="GO" id="GO:0004324">
    <property type="term" value="F:ferredoxin-NADP+ reductase activity"/>
    <property type="evidence" value="ECO:0007669"/>
    <property type="project" value="UniProtKB-UniRule"/>
</dbReference>
<dbReference type="GO" id="GO:0050660">
    <property type="term" value="F:flavin adenine dinucleotide binding"/>
    <property type="evidence" value="ECO:0007669"/>
    <property type="project" value="UniProtKB-UniRule"/>
</dbReference>
<dbReference type="GO" id="GO:0050661">
    <property type="term" value="F:NADP binding"/>
    <property type="evidence" value="ECO:0007669"/>
    <property type="project" value="UniProtKB-UniRule"/>
</dbReference>
<dbReference type="Gene3D" id="3.50.50.60">
    <property type="entry name" value="FAD/NAD(P)-binding domain"/>
    <property type="match status" value="2"/>
</dbReference>
<dbReference type="HAMAP" id="MF_01685">
    <property type="entry name" value="FENR2"/>
    <property type="match status" value="1"/>
</dbReference>
<dbReference type="InterPro" id="IPR036188">
    <property type="entry name" value="FAD/NAD-bd_sf"/>
</dbReference>
<dbReference type="InterPro" id="IPR023753">
    <property type="entry name" value="FAD/NAD-binding_dom"/>
</dbReference>
<dbReference type="InterPro" id="IPR022890">
    <property type="entry name" value="Fd--NADP_Rdtase_type_2"/>
</dbReference>
<dbReference type="InterPro" id="IPR050097">
    <property type="entry name" value="Ferredoxin-NADP_redctase_2"/>
</dbReference>
<dbReference type="PANTHER" id="PTHR48105">
    <property type="entry name" value="THIOREDOXIN REDUCTASE 1-RELATED-RELATED"/>
    <property type="match status" value="1"/>
</dbReference>
<dbReference type="Pfam" id="PF07992">
    <property type="entry name" value="Pyr_redox_2"/>
    <property type="match status" value="1"/>
</dbReference>
<dbReference type="PRINTS" id="PR00368">
    <property type="entry name" value="FADPNR"/>
</dbReference>
<dbReference type="PRINTS" id="PR00469">
    <property type="entry name" value="PNDRDTASEII"/>
</dbReference>
<dbReference type="SUPFAM" id="SSF51905">
    <property type="entry name" value="FAD/NAD(P)-binding domain"/>
    <property type="match status" value="1"/>
</dbReference>
<comment type="catalytic activity">
    <reaction evidence="1">
        <text>2 reduced [2Fe-2S]-[ferredoxin] + NADP(+) + H(+) = 2 oxidized [2Fe-2S]-[ferredoxin] + NADPH</text>
        <dbReference type="Rhea" id="RHEA:20125"/>
        <dbReference type="Rhea" id="RHEA-COMP:10000"/>
        <dbReference type="Rhea" id="RHEA-COMP:10001"/>
        <dbReference type="ChEBI" id="CHEBI:15378"/>
        <dbReference type="ChEBI" id="CHEBI:33737"/>
        <dbReference type="ChEBI" id="CHEBI:33738"/>
        <dbReference type="ChEBI" id="CHEBI:57783"/>
        <dbReference type="ChEBI" id="CHEBI:58349"/>
        <dbReference type="EC" id="1.18.1.2"/>
    </reaction>
</comment>
<comment type="cofactor">
    <cofactor evidence="1">
        <name>FAD</name>
        <dbReference type="ChEBI" id="CHEBI:57692"/>
    </cofactor>
    <text evidence="1">Binds 1 FAD per subunit.</text>
</comment>
<comment type="subunit">
    <text evidence="1">Homodimer.</text>
</comment>
<comment type="similarity">
    <text evidence="1">Belongs to the ferredoxin--NADP reductase type 2 family.</text>
</comment>
<proteinExistence type="inferred from homology"/>